<reference key="1">
    <citation type="journal article" date="1993" name="Biochem. J.">
        <title>Organization and sequences of genes for the subunits of ATP synthase in the thermophilic cyanobacterium Synechococcus 6716.</title>
        <authorList>
            <person name="van Walraven H.S."/>
            <person name="Lutter R."/>
            <person name="Walker J.E."/>
        </authorList>
    </citation>
    <scope>NUCLEOTIDE SEQUENCE [GENOMIC DNA]</scope>
</reference>
<keyword id="KW-1003">Cell membrane</keyword>
<keyword id="KW-0138">CF(0)</keyword>
<keyword id="KW-0375">Hydrogen ion transport</keyword>
<keyword id="KW-0406">Ion transport</keyword>
<keyword id="KW-0472">Membrane</keyword>
<keyword id="KW-0812">Transmembrane</keyword>
<keyword id="KW-1133">Transmembrane helix</keyword>
<keyword id="KW-0813">Transport</keyword>
<comment type="function">
    <text>A possible function for this protein is to guide the assembly of the membrane sector of the ATPase enzyme complex.</text>
</comment>
<comment type="subcellular location">
    <subcellularLocation>
        <location evidence="2">Cell membrane</location>
        <topology evidence="2">Multi-pass membrane protein</topology>
    </subcellularLocation>
</comment>
<comment type="similarity">
    <text evidence="2">Belongs to the bacterial AtpI family.</text>
</comment>
<comment type="sequence caution" evidence="2">
    <conflict type="erroneous initiation">
        <sequence resource="EMBL-CDS" id="CAA49876"/>
    </conflict>
</comment>
<accession>Q05376</accession>
<feature type="chain" id="PRO_0000071716" description="ATP synthase protein I">
    <location>
        <begin position="1"/>
        <end position="115"/>
    </location>
</feature>
<feature type="transmembrane region" description="Helical" evidence="1">
    <location>
        <begin position="10"/>
        <end position="30"/>
    </location>
</feature>
<feature type="transmembrane region" description="Helical" evidence="1">
    <location>
        <begin position="87"/>
        <end position="107"/>
    </location>
</feature>
<gene>
    <name type="primary">atpI</name>
</gene>
<protein>
    <recommendedName>
        <fullName>ATP synthase protein I</fullName>
    </recommendedName>
</protein>
<sequence length="115" mass="13021">MAEFYQLCRELFTTSLVLMAIAFGTVWVIYDLNTALNYLLGASASLIYLRLLARNVERLGHDQKKLGKTQLLVVVAVIILAARWHELHIIPVFLGFLTYKAAILVYMLRTVLPSP</sequence>
<name>ATPZ_SYNP1</name>
<evidence type="ECO:0000255" key="1"/>
<evidence type="ECO:0000305" key="2"/>
<proteinExistence type="inferred from homology"/>
<organism>
    <name type="scientific">Synechococcus sp. (strain PCC 6716)</name>
    <dbReference type="NCBI Taxonomy" id="32048"/>
    <lineage>
        <taxon>Bacteria</taxon>
        <taxon>Bacillati</taxon>
        <taxon>Cyanobacteriota</taxon>
        <taxon>Cyanophyceae</taxon>
        <taxon>Synechococcales</taxon>
        <taxon>Synechococcaceae</taxon>
        <taxon>Synechococcus</taxon>
    </lineage>
</organism>
<dbReference type="EMBL" id="X70431">
    <property type="protein sequence ID" value="CAA49876.1"/>
    <property type="status" value="ALT_INIT"/>
    <property type="molecule type" value="Genomic_DNA"/>
</dbReference>
<dbReference type="PIR" id="S36966">
    <property type="entry name" value="S36966"/>
</dbReference>
<dbReference type="GO" id="GO:0005886">
    <property type="term" value="C:plasma membrane"/>
    <property type="evidence" value="ECO:0007669"/>
    <property type="project" value="UniProtKB-SubCell"/>
</dbReference>
<dbReference type="GO" id="GO:0045259">
    <property type="term" value="C:proton-transporting ATP synthase complex"/>
    <property type="evidence" value="ECO:0007669"/>
    <property type="project" value="UniProtKB-KW"/>
</dbReference>
<dbReference type="GO" id="GO:1902600">
    <property type="term" value="P:proton transmembrane transport"/>
    <property type="evidence" value="ECO:0007669"/>
    <property type="project" value="UniProtKB-KW"/>
</dbReference>
<dbReference type="InterPro" id="IPR056309">
    <property type="entry name" value="CGL160/ATPI_dom"/>
</dbReference>
<dbReference type="Pfam" id="PF24763">
    <property type="entry name" value="CGL160_C"/>
    <property type="match status" value="1"/>
</dbReference>